<sequence>MSTGKIIQVIGAVIDVEFARDNTPKVYDALNVVEAGLVLEVQQQIGDGVVRTIAMGSSDGLRRGMEVKNTNAPISVPVGHGTLGRIMNVLGEPIDEAGPIEYTEKRSIHQAPPAYDELALSTEILETGIKVVDLICPFAKGGKVGLFGGAGVGKTVTMMELINNIAKEHSGYSVFAGVGERTREGNDFYYEMKDSNVLDKVSLVYGQMNEPPGNRLRVALSGLTIAEGFRDEKRDVLMFIDNIYRYTLAGTEVSALLGRMPSAVGYQPTLAAEMGALQERITSTKTGSITSVQAVYVPADDLTDPSPATTFSHLDATIVLSRQIAELGIYPAVDPLDSTSRQLDPLVVGQDHYETARAVQKVLQRYKELKDIIAILGMDELSDEDKKIVDRARKIQRFLSQPFHVAEVFTGNPGKFVSLKDTVASFKAIVNGEYDHLPEQAFYMVGSIQEAIEKAKTL</sequence>
<keyword id="KW-0066">ATP synthesis</keyword>
<keyword id="KW-0067">ATP-binding</keyword>
<keyword id="KW-0997">Cell inner membrane</keyword>
<keyword id="KW-1003">Cell membrane</keyword>
<keyword id="KW-0139">CF(1)</keyword>
<keyword id="KW-0375">Hydrogen ion transport</keyword>
<keyword id="KW-0406">Ion transport</keyword>
<keyword id="KW-0472">Membrane</keyword>
<keyword id="KW-0547">Nucleotide-binding</keyword>
<keyword id="KW-1278">Translocase</keyword>
<keyword id="KW-0813">Transport</keyword>
<protein>
    <recommendedName>
        <fullName evidence="1">ATP synthase subunit beta</fullName>
        <ecNumber evidence="1">7.1.2.2</ecNumber>
    </recommendedName>
    <alternativeName>
        <fullName evidence="1">ATP synthase F1 sector subunit beta</fullName>
    </alternativeName>
    <alternativeName>
        <fullName evidence="1">F-ATPase subunit beta</fullName>
    </alternativeName>
</protein>
<evidence type="ECO:0000255" key="1">
    <source>
        <dbReference type="HAMAP-Rule" id="MF_01347"/>
    </source>
</evidence>
<accession>Q14K06</accession>
<dbReference type="EC" id="7.1.2.2" evidence="1"/>
<dbReference type="EMBL" id="AM286280">
    <property type="protein sequence ID" value="CAL08080.1"/>
    <property type="molecule type" value="Genomic_DNA"/>
</dbReference>
<dbReference type="RefSeq" id="WP_003019768.1">
    <property type="nucleotide sequence ID" value="NC_008245.1"/>
</dbReference>
<dbReference type="SMR" id="Q14K06"/>
<dbReference type="GeneID" id="75264623"/>
<dbReference type="KEGG" id="ftf:FTF0064"/>
<dbReference type="HOGENOM" id="CLU_022398_0_2_6"/>
<dbReference type="GO" id="GO:0005886">
    <property type="term" value="C:plasma membrane"/>
    <property type="evidence" value="ECO:0007669"/>
    <property type="project" value="UniProtKB-SubCell"/>
</dbReference>
<dbReference type="GO" id="GO:0045259">
    <property type="term" value="C:proton-transporting ATP synthase complex"/>
    <property type="evidence" value="ECO:0007669"/>
    <property type="project" value="UniProtKB-KW"/>
</dbReference>
<dbReference type="GO" id="GO:0005524">
    <property type="term" value="F:ATP binding"/>
    <property type="evidence" value="ECO:0007669"/>
    <property type="project" value="UniProtKB-UniRule"/>
</dbReference>
<dbReference type="GO" id="GO:0016887">
    <property type="term" value="F:ATP hydrolysis activity"/>
    <property type="evidence" value="ECO:0007669"/>
    <property type="project" value="InterPro"/>
</dbReference>
<dbReference type="GO" id="GO:0046933">
    <property type="term" value="F:proton-transporting ATP synthase activity, rotational mechanism"/>
    <property type="evidence" value="ECO:0007669"/>
    <property type="project" value="UniProtKB-UniRule"/>
</dbReference>
<dbReference type="CDD" id="cd18110">
    <property type="entry name" value="ATP-synt_F1_beta_C"/>
    <property type="match status" value="1"/>
</dbReference>
<dbReference type="CDD" id="cd18115">
    <property type="entry name" value="ATP-synt_F1_beta_N"/>
    <property type="match status" value="1"/>
</dbReference>
<dbReference type="CDD" id="cd01133">
    <property type="entry name" value="F1-ATPase_beta_CD"/>
    <property type="match status" value="1"/>
</dbReference>
<dbReference type="FunFam" id="1.10.1140.10:FF:000001">
    <property type="entry name" value="ATP synthase subunit beta"/>
    <property type="match status" value="1"/>
</dbReference>
<dbReference type="FunFam" id="2.40.10.170:FF:000003">
    <property type="entry name" value="ATP synthase subunit beta"/>
    <property type="match status" value="1"/>
</dbReference>
<dbReference type="FunFam" id="3.40.50.300:FF:000004">
    <property type="entry name" value="ATP synthase subunit beta"/>
    <property type="match status" value="1"/>
</dbReference>
<dbReference type="Gene3D" id="2.40.10.170">
    <property type="match status" value="1"/>
</dbReference>
<dbReference type="Gene3D" id="1.10.1140.10">
    <property type="entry name" value="Bovine Mitochondrial F1-atpase, Atp Synthase Beta Chain, Chain D, domain 3"/>
    <property type="match status" value="1"/>
</dbReference>
<dbReference type="Gene3D" id="3.40.50.300">
    <property type="entry name" value="P-loop containing nucleotide triphosphate hydrolases"/>
    <property type="match status" value="1"/>
</dbReference>
<dbReference type="HAMAP" id="MF_01347">
    <property type="entry name" value="ATP_synth_beta_bact"/>
    <property type="match status" value="1"/>
</dbReference>
<dbReference type="InterPro" id="IPR003593">
    <property type="entry name" value="AAA+_ATPase"/>
</dbReference>
<dbReference type="InterPro" id="IPR055190">
    <property type="entry name" value="ATP-synt_VA_C"/>
</dbReference>
<dbReference type="InterPro" id="IPR005722">
    <property type="entry name" value="ATP_synth_F1_bsu"/>
</dbReference>
<dbReference type="InterPro" id="IPR020003">
    <property type="entry name" value="ATPase_a/bsu_AS"/>
</dbReference>
<dbReference type="InterPro" id="IPR050053">
    <property type="entry name" value="ATPase_alpha/beta_chains"/>
</dbReference>
<dbReference type="InterPro" id="IPR004100">
    <property type="entry name" value="ATPase_F1/V1/A1_a/bsu_N"/>
</dbReference>
<dbReference type="InterPro" id="IPR036121">
    <property type="entry name" value="ATPase_F1/V1/A1_a/bsu_N_sf"/>
</dbReference>
<dbReference type="InterPro" id="IPR000194">
    <property type="entry name" value="ATPase_F1/V1/A1_a/bsu_nucl-bd"/>
</dbReference>
<dbReference type="InterPro" id="IPR024034">
    <property type="entry name" value="ATPase_F1/V1_b/a_C"/>
</dbReference>
<dbReference type="InterPro" id="IPR027417">
    <property type="entry name" value="P-loop_NTPase"/>
</dbReference>
<dbReference type="NCBIfam" id="TIGR01039">
    <property type="entry name" value="atpD"/>
    <property type="match status" value="1"/>
</dbReference>
<dbReference type="PANTHER" id="PTHR15184">
    <property type="entry name" value="ATP SYNTHASE"/>
    <property type="match status" value="1"/>
</dbReference>
<dbReference type="PANTHER" id="PTHR15184:SF71">
    <property type="entry name" value="ATP SYNTHASE SUBUNIT BETA, MITOCHONDRIAL"/>
    <property type="match status" value="1"/>
</dbReference>
<dbReference type="Pfam" id="PF00006">
    <property type="entry name" value="ATP-synt_ab"/>
    <property type="match status" value="1"/>
</dbReference>
<dbReference type="Pfam" id="PF02874">
    <property type="entry name" value="ATP-synt_ab_N"/>
    <property type="match status" value="1"/>
</dbReference>
<dbReference type="Pfam" id="PF22919">
    <property type="entry name" value="ATP-synt_VA_C"/>
    <property type="match status" value="1"/>
</dbReference>
<dbReference type="SMART" id="SM00382">
    <property type="entry name" value="AAA"/>
    <property type="match status" value="1"/>
</dbReference>
<dbReference type="SUPFAM" id="SSF47917">
    <property type="entry name" value="C-terminal domain of alpha and beta subunits of F1 ATP synthase"/>
    <property type="match status" value="1"/>
</dbReference>
<dbReference type="SUPFAM" id="SSF50615">
    <property type="entry name" value="N-terminal domain of alpha and beta subunits of F1 ATP synthase"/>
    <property type="match status" value="1"/>
</dbReference>
<dbReference type="SUPFAM" id="SSF52540">
    <property type="entry name" value="P-loop containing nucleoside triphosphate hydrolases"/>
    <property type="match status" value="1"/>
</dbReference>
<dbReference type="PROSITE" id="PS00152">
    <property type="entry name" value="ATPASE_ALPHA_BETA"/>
    <property type="match status" value="1"/>
</dbReference>
<gene>
    <name evidence="1" type="primary">atpD</name>
    <name type="ordered locus">FTF0064</name>
</gene>
<organism>
    <name type="scientific">Francisella tularensis subsp. tularensis (strain FSC 198)</name>
    <dbReference type="NCBI Taxonomy" id="393115"/>
    <lineage>
        <taxon>Bacteria</taxon>
        <taxon>Pseudomonadati</taxon>
        <taxon>Pseudomonadota</taxon>
        <taxon>Gammaproteobacteria</taxon>
        <taxon>Thiotrichales</taxon>
        <taxon>Francisellaceae</taxon>
        <taxon>Francisella</taxon>
    </lineage>
</organism>
<comment type="function">
    <text evidence="1">Produces ATP from ADP in the presence of a proton gradient across the membrane. The catalytic sites are hosted primarily by the beta subunits.</text>
</comment>
<comment type="catalytic activity">
    <reaction evidence="1">
        <text>ATP + H2O + 4 H(+)(in) = ADP + phosphate + 5 H(+)(out)</text>
        <dbReference type="Rhea" id="RHEA:57720"/>
        <dbReference type="ChEBI" id="CHEBI:15377"/>
        <dbReference type="ChEBI" id="CHEBI:15378"/>
        <dbReference type="ChEBI" id="CHEBI:30616"/>
        <dbReference type="ChEBI" id="CHEBI:43474"/>
        <dbReference type="ChEBI" id="CHEBI:456216"/>
        <dbReference type="EC" id="7.1.2.2"/>
    </reaction>
</comment>
<comment type="subunit">
    <text evidence="1">F-type ATPases have 2 components, CF(1) - the catalytic core - and CF(0) - the membrane proton channel. CF(1) has five subunits: alpha(3), beta(3), gamma(1), delta(1), epsilon(1). CF(0) has three main subunits: a(1), b(2) and c(9-12). The alpha and beta chains form an alternating ring which encloses part of the gamma chain. CF(1) is attached to CF(0) by a central stalk formed by the gamma and epsilon chains, while a peripheral stalk is formed by the delta and b chains.</text>
</comment>
<comment type="subcellular location">
    <subcellularLocation>
        <location evidence="1">Cell inner membrane</location>
        <topology evidence="1">Peripheral membrane protein</topology>
    </subcellularLocation>
</comment>
<comment type="similarity">
    <text evidence="1">Belongs to the ATPase alpha/beta chains family.</text>
</comment>
<reference key="1">
    <citation type="journal article" date="2007" name="PLoS ONE">
        <title>Genome sequencing shows that European isolates of Francisella tularensis subspecies tularensis are almost identical to US laboratory strain Schu S4.</title>
        <authorList>
            <person name="Chaudhuri R.R."/>
            <person name="Ren C.-P."/>
            <person name="Desmond L."/>
            <person name="Vincent G.A."/>
            <person name="Silman N.J."/>
            <person name="Brehm J.K."/>
            <person name="Elmore M.J."/>
            <person name="Hudson M.J."/>
            <person name="Forsman M."/>
            <person name="Isherwood K.E."/>
            <person name="Gurycova D."/>
            <person name="Minton N.P."/>
            <person name="Titball R.W."/>
            <person name="Pallen M.J."/>
            <person name="Vipond R."/>
        </authorList>
    </citation>
    <scope>NUCLEOTIDE SEQUENCE [LARGE SCALE GENOMIC DNA]</scope>
    <source>
        <strain>FSC 198</strain>
    </source>
</reference>
<name>ATPB_FRAT1</name>
<feature type="chain" id="PRO_1000055111" description="ATP synthase subunit beta">
    <location>
        <begin position="1"/>
        <end position="458"/>
    </location>
</feature>
<feature type="binding site" evidence="1">
    <location>
        <begin position="148"/>
        <end position="155"/>
    </location>
    <ligand>
        <name>ATP</name>
        <dbReference type="ChEBI" id="CHEBI:30616"/>
    </ligand>
</feature>
<proteinExistence type="inferred from homology"/>